<reference key="1">
    <citation type="journal article" date="2007" name="Proc. Natl. Acad. Sci. U.S.A.">
        <title>Genome plasticity of BCG and impact on vaccine efficacy.</title>
        <authorList>
            <person name="Brosch R."/>
            <person name="Gordon S.V."/>
            <person name="Garnier T."/>
            <person name="Eiglmeier K."/>
            <person name="Frigui W."/>
            <person name="Valenti P."/>
            <person name="Dos Santos S."/>
            <person name="Duthoy S."/>
            <person name="Lacroix C."/>
            <person name="Garcia-Pelayo C."/>
            <person name="Inwald J.K."/>
            <person name="Golby P."/>
            <person name="Garcia J.N."/>
            <person name="Hewinson R.G."/>
            <person name="Behr M.A."/>
            <person name="Quail M.A."/>
            <person name="Churcher C."/>
            <person name="Barrell B.G."/>
            <person name="Parkhill J."/>
            <person name="Cole S.T."/>
        </authorList>
    </citation>
    <scope>NUCLEOTIDE SEQUENCE [LARGE SCALE GENOMIC DNA]</scope>
    <source>
        <strain>BCG / Pasteur 1173P2</strain>
    </source>
</reference>
<sequence>MTWHPHANRLKTFLLLVGMSALIVAVGALFGRTALMLAALFAVGMNVYVYFNSDKLALRAMHAQPVSELQAPAMYRIVRELATSAHQPMPRLYISDTAAPNAFATGRNPRNAAVCCTTGILRILNERELRAVLGHELSHVYNRDILISCVAGALAAVITALANMAMWAGMFGGNRDNANPFALLLVALLGPIAATVIRMAVSRSREYQADESGAVLTGDPLALASALRKISGGVQAAPLPPEPQLASQAHLMIANPFRAGERIGSLFSTHPPIEDRIRRLEAMARG</sequence>
<name>HTPX_MYCBP</name>
<comment type="cofactor">
    <cofactor evidence="1">
        <name>Zn(2+)</name>
        <dbReference type="ChEBI" id="CHEBI:29105"/>
    </cofactor>
    <text evidence="1">Binds 1 zinc ion per subunit.</text>
</comment>
<comment type="subcellular location">
    <subcellularLocation>
        <location evidence="1">Cell membrane</location>
        <topology evidence="1">Multi-pass membrane protein</topology>
    </subcellularLocation>
</comment>
<comment type="similarity">
    <text evidence="1">Belongs to the peptidase M48B family.</text>
</comment>
<protein>
    <recommendedName>
        <fullName evidence="1">Protease HtpX homolog</fullName>
        <ecNumber evidence="1">3.4.24.-</ecNumber>
    </recommendedName>
</protein>
<proteinExistence type="inferred from homology"/>
<feature type="chain" id="PRO_1000020888" description="Protease HtpX homolog">
    <location>
        <begin position="1"/>
        <end position="286"/>
    </location>
</feature>
<feature type="transmembrane region" description="Helical" evidence="1">
    <location>
        <begin position="10"/>
        <end position="30"/>
    </location>
</feature>
<feature type="transmembrane region" description="Helical" evidence="1">
    <location>
        <begin position="33"/>
        <end position="53"/>
    </location>
</feature>
<feature type="transmembrane region" description="Helical" evidence="1">
    <location>
        <begin position="145"/>
        <end position="165"/>
    </location>
</feature>
<feature type="transmembrane region" description="Helical" evidence="1">
    <location>
        <begin position="181"/>
        <end position="201"/>
    </location>
</feature>
<feature type="active site" evidence="1">
    <location>
        <position position="136"/>
    </location>
</feature>
<feature type="binding site" evidence="1">
    <location>
        <position position="135"/>
    </location>
    <ligand>
        <name>Zn(2+)</name>
        <dbReference type="ChEBI" id="CHEBI:29105"/>
        <note>catalytic</note>
    </ligand>
</feature>
<feature type="binding site" evidence="1">
    <location>
        <position position="139"/>
    </location>
    <ligand>
        <name>Zn(2+)</name>
        <dbReference type="ChEBI" id="CHEBI:29105"/>
        <note>catalytic</note>
    </ligand>
</feature>
<feature type="binding site" evidence="1">
    <location>
        <position position="206"/>
    </location>
    <ligand>
        <name>Zn(2+)</name>
        <dbReference type="ChEBI" id="CHEBI:29105"/>
        <note>catalytic</note>
    </ligand>
</feature>
<evidence type="ECO:0000255" key="1">
    <source>
        <dbReference type="HAMAP-Rule" id="MF_00188"/>
    </source>
</evidence>
<gene>
    <name evidence="1" type="primary">htpX</name>
    <name type="ordered locus">BCG_0608</name>
</gene>
<accession>A1KG40</accession>
<dbReference type="EC" id="3.4.24.-" evidence="1"/>
<dbReference type="EMBL" id="AM408590">
    <property type="protein sequence ID" value="CAL70593.1"/>
    <property type="molecule type" value="Genomic_DNA"/>
</dbReference>
<dbReference type="RefSeq" id="WP_003402959.1">
    <property type="nucleotide sequence ID" value="NC_008769.1"/>
</dbReference>
<dbReference type="KEGG" id="mbb:BCG_0608"/>
<dbReference type="HOGENOM" id="CLU_042266_3_1_11"/>
<dbReference type="Proteomes" id="UP000001472">
    <property type="component" value="Chromosome"/>
</dbReference>
<dbReference type="GO" id="GO:0005886">
    <property type="term" value="C:plasma membrane"/>
    <property type="evidence" value="ECO:0007669"/>
    <property type="project" value="UniProtKB-SubCell"/>
</dbReference>
<dbReference type="GO" id="GO:0004222">
    <property type="term" value="F:metalloendopeptidase activity"/>
    <property type="evidence" value="ECO:0007669"/>
    <property type="project" value="UniProtKB-UniRule"/>
</dbReference>
<dbReference type="GO" id="GO:0008270">
    <property type="term" value="F:zinc ion binding"/>
    <property type="evidence" value="ECO:0007669"/>
    <property type="project" value="UniProtKB-UniRule"/>
</dbReference>
<dbReference type="GO" id="GO:0006508">
    <property type="term" value="P:proteolysis"/>
    <property type="evidence" value="ECO:0007669"/>
    <property type="project" value="UniProtKB-KW"/>
</dbReference>
<dbReference type="CDD" id="cd07336">
    <property type="entry name" value="M48B_HtpX_like"/>
    <property type="match status" value="1"/>
</dbReference>
<dbReference type="FunFam" id="3.30.2010.10:FF:000008">
    <property type="entry name" value="Protease HtpX homolog"/>
    <property type="match status" value="1"/>
</dbReference>
<dbReference type="Gene3D" id="3.30.2010.10">
    <property type="entry name" value="Metalloproteases ('zincins'), catalytic domain"/>
    <property type="match status" value="1"/>
</dbReference>
<dbReference type="HAMAP" id="MF_00188">
    <property type="entry name" value="Pept_M48_protease_HtpX"/>
    <property type="match status" value="1"/>
</dbReference>
<dbReference type="InterPro" id="IPR050083">
    <property type="entry name" value="HtpX_protease"/>
</dbReference>
<dbReference type="InterPro" id="IPR022919">
    <property type="entry name" value="Pept_M48_protease_HtpX"/>
</dbReference>
<dbReference type="InterPro" id="IPR001915">
    <property type="entry name" value="Peptidase_M48"/>
</dbReference>
<dbReference type="NCBIfam" id="NF002839">
    <property type="entry name" value="PRK03072.1"/>
    <property type="match status" value="1"/>
</dbReference>
<dbReference type="PANTHER" id="PTHR43221">
    <property type="entry name" value="PROTEASE HTPX"/>
    <property type="match status" value="1"/>
</dbReference>
<dbReference type="PANTHER" id="PTHR43221:SF1">
    <property type="entry name" value="PROTEASE HTPX"/>
    <property type="match status" value="1"/>
</dbReference>
<dbReference type="Pfam" id="PF01435">
    <property type="entry name" value="Peptidase_M48"/>
    <property type="match status" value="1"/>
</dbReference>
<dbReference type="PROSITE" id="PS00142">
    <property type="entry name" value="ZINC_PROTEASE"/>
    <property type="match status" value="1"/>
</dbReference>
<keyword id="KW-1003">Cell membrane</keyword>
<keyword id="KW-0378">Hydrolase</keyword>
<keyword id="KW-0472">Membrane</keyword>
<keyword id="KW-0479">Metal-binding</keyword>
<keyword id="KW-0482">Metalloprotease</keyword>
<keyword id="KW-0645">Protease</keyword>
<keyword id="KW-0812">Transmembrane</keyword>
<keyword id="KW-1133">Transmembrane helix</keyword>
<keyword id="KW-0862">Zinc</keyword>
<organism>
    <name type="scientific">Mycobacterium bovis (strain BCG / Pasteur 1173P2)</name>
    <dbReference type="NCBI Taxonomy" id="410289"/>
    <lineage>
        <taxon>Bacteria</taxon>
        <taxon>Bacillati</taxon>
        <taxon>Actinomycetota</taxon>
        <taxon>Actinomycetes</taxon>
        <taxon>Mycobacteriales</taxon>
        <taxon>Mycobacteriaceae</taxon>
        <taxon>Mycobacterium</taxon>
        <taxon>Mycobacterium tuberculosis complex</taxon>
    </lineage>
</organism>